<reference key="1">
    <citation type="journal article" date="2000" name="Biochem. J.">
        <title>Identification of pleckstrin-homology-domain-containing proteins with novel phosphoinositide-binding specificities.</title>
        <authorList>
            <person name="Dowler S.J."/>
            <person name="Currie R.A."/>
            <person name="Campbell D.G."/>
            <person name="Deak M."/>
            <person name="Kular G."/>
            <person name="Downes C.P."/>
            <person name="Alessi D.R."/>
        </authorList>
    </citation>
    <scope>NUCLEOTIDE SEQUENCE [MRNA]</scope>
    <scope>FUNCTION</scope>
</reference>
<reference key="2">
    <citation type="journal article" date="2004" name="Nat. Genet.">
        <title>Complete sequencing and characterization of 21,243 full-length human cDNAs.</title>
        <authorList>
            <person name="Ota T."/>
            <person name="Suzuki Y."/>
            <person name="Nishikawa T."/>
            <person name="Otsuki T."/>
            <person name="Sugiyama T."/>
            <person name="Irie R."/>
            <person name="Wakamatsu A."/>
            <person name="Hayashi K."/>
            <person name="Sato H."/>
            <person name="Nagai K."/>
            <person name="Kimura K."/>
            <person name="Makita H."/>
            <person name="Sekine M."/>
            <person name="Obayashi M."/>
            <person name="Nishi T."/>
            <person name="Shibahara T."/>
            <person name="Tanaka T."/>
            <person name="Ishii S."/>
            <person name="Yamamoto J."/>
            <person name="Saito K."/>
            <person name="Kawai Y."/>
            <person name="Isono Y."/>
            <person name="Nakamura Y."/>
            <person name="Nagahari K."/>
            <person name="Murakami K."/>
            <person name="Yasuda T."/>
            <person name="Iwayanagi T."/>
            <person name="Wagatsuma M."/>
            <person name="Shiratori A."/>
            <person name="Sudo H."/>
            <person name="Hosoiri T."/>
            <person name="Kaku Y."/>
            <person name="Kodaira H."/>
            <person name="Kondo H."/>
            <person name="Sugawara M."/>
            <person name="Takahashi M."/>
            <person name="Kanda K."/>
            <person name="Yokoi T."/>
            <person name="Furuya T."/>
            <person name="Kikkawa E."/>
            <person name="Omura Y."/>
            <person name="Abe K."/>
            <person name="Kamihara K."/>
            <person name="Katsuta N."/>
            <person name="Sato K."/>
            <person name="Tanikawa M."/>
            <person name="Yamazaki M."/>
            <person name="Ninomiya K."/>
            <person name="Ishibashi T."/>
            <person name="Yamashita H."/>
            <person name="Murakawa K."/>
            <person name="Fujimori K."/>
            <person name="Tanai H."/>
            <person name="Kimata M."/>
            <person name="Watanabe M."/>
            <person name="Hiraoka S."/>
            <person name="Chiba Y."/>
            <person name="Ishida S."/>
            <person name="Ono Y."/>
            <person name="Takiguchi S."/>
            <person name="Watanabe S."/>
            <person name="Yosida M."/>
            <person name="Hotuta T."/>
            <person name="Kusano J."/>
            <person name="Kanehori K."/>
            <person name="Takahashi-Fujii A."/>
            <person name="Hara H."/>
            <person name="Tanase T.-O."/>
            <person name="Nomura Y."/>
            <person name="Togiya S."/>
            <person name="Komai F."/>
            <person name="Hara R."/>
            <person name="Takeuchi K."/>
            <person name="Arita M."/>
            <person name="Imose N."/>
            <person name="Musashino K."/>
            <person name="Yuuki H."/>
            <person name="Oshima A."/>
            <person name="Sasaki N."/>
            <person name="Aotsuka S."/>
            <person name="Yoshikawa Y."/>
            <person name="Matsunawa H."/>
            <person name="Ichihara T."/>
            <person name="Shiohata N."/>
            <person name="Sano S."/>
            <person name="Moriya S."/>
            <person name="Momiyama H."/>
            <person name="Satoh N."/>
            <person name="Takami S."/>
            <person name="Terashima Y."/>
            <person name="Suzuki O."/>
            <person name="Nakagawa S."/>
            <person name="Senoh A."/>
            <person name="Mizoguchi H."/>
            <person name="Goto Y."/>
            <person name="Shimizu F."/>
            <person name="Wakebe H."/>
            <person name="Hishigaki H."/>
            <person name="Watanabe T."/>
            <person name="Sugiyama A."/>
            <person name="Takemoto M."/>
            <person name="Kawakami B."/>
            <person name="Yamazaki M."/>
            <person name="Watanabe K."/>
            <person name="Kumagai A."/>
            <person name="Itakura S."/>
            <person name="Fukuzumi Y."/>
            <person name="Fujimori Y."/>
            <person name="Komiyama M."/>
            <person name="Tashiro H."/>
            <person name="Tanigami A."/>
            <person name="Fujiwara T."/>
            <person name="Ono T."/>
            <person name="Yamada K."/>
            <person name="Fujii Y."/>
            <person name="Ozaki K."/>
            <person name="Hirao M."/>
            <person name="Ohmori Y."/>
            <person name="Kawabata A."/>
            <person name="Hikiji T."/>
            <person name="Kobatake N."/>
            <person name="Inagaki H."/>
            <person name="Ikema Y."/>
            <person name="Okamoto S."/>
            <person name="Okitani R."/>
            <person name="Kawakami T."/>
            <person name="Noguchi S."/>
            <person name="Itoh T."/>
            <person name="Shigeta K."/>
            <person name="Senba T."/>
            <person name="Matsumura K."/>
            <person name="Nakajima Y."/>
            <person name="Mizuno T."/>
            <person name="Morinaga M."/>
            <person name="Sasaki M."/>
            <person name="Togashi T."/>
            <person name="Oyama M."/>
            <person name="Hata H."/>
            <person name="Watanabe M."/>
            <person name="Komatsu T."/>
            <person name="Mizushima-Sugano J."/>
            <person name="Satoh T."/>
            <person name="Shirai Y."/>
            <person name="Takahashi Y."/>
            <person name="Nakagawa K."/>
            <person name="Okumura K."/>
            <person name="Nagase T."/>
            <person name="Nomura N."/>
            <person name="Kikuchi H."/>
            <person name="Masuho Y."/>
            <person name="Yamashita R."/>
            <person name="Nakai K."/>
            <person name="Yada T."/>
            <person name="Nakamura Y."/>
            <person name="Ohara O."/>
            <person name="Isogai T."/>
            <person name="Sugano S."/>
        </authorList>
    </citation>
    <scope>NUCLEOTIDE SEQUENCE [LARGE SCALE MRNA]</scope>
    <source>
        <tissue>Brain</tissue>
        <tissue>Colon</tissue>
    </source>
</reference>
<reference key="3">
    <citation type="journal article" date="2005" name="Nature">
        <title>Generation and annotation of the DNA sequences of human chromosomes 2 and 4.</title>
        <authorList>
            <person name="Hillier L.W."/>
            <person name="Graves T.A."/>
            <person name="Fulton R.S."/>
            <person name="Fulton L.A."/>
            <person name="Pepin K.H."/>
            <person name="Minx P."/>
            <person name="Wagner-McPherson C."/>
            <person name="Layman D."/>
            <person name="Wylie K."/>
            <person name="Sekhon M."/>
            <person name="Becker M.C."/>
            <person name="Fewell G.A."/>
            <person name="Delehaunty K.D."/>
            <person name="Miner T.L."/>
            <person name="Nash W.E."/>
            <person name="Kremitzki C."/>
            <person name="Oddy L."/>
            <person name="Du H."/>
            <person name="Sun H."/>
            <person name="Bradshaw-Cordum H."/>
            <person name="Ali J."/>
            <person name="Carter J."/>
            <person name="Cordes M."/>
            <person name="Harris A."/>
            <person name="Isak A."/>
            <person name="van Brunt A."/>
            <person name="Nguyen C."/>
            <person name="Du F."/>
            <person name="Courtney L."/>
            <person name="Kalicki J."/>
            <person name="Ozersky P."/>
            <person name="Abbott S."/>
            <person name="Armstrong J."/>
            <person name="Belter E.A."/>
            <person name="Caruso L."/>
            <person name="Cedroni M."/>
            <person name="Cotton M."/>
            <person name="Davidson T."/>
            <person name="Desai A."/>
            <person name="Elliott G."/>
            <person name="Erb T."/>
            <person name="Fronick C."/>
            <person name="Gaige T."/>
            <person name="Haakenson W."/>
            <person name="Haglund K."/>
            <person name="Holmes A."/>
            <person name="Harkins R."/>
            <person name="Kim K."/>
            <person name="Kruchowski S.S."/>
            <person name="Strong C.M."/>
            <person name="Grewal N."/>
            <person name="Goyea E."/>
            <person name="Hou S."/>
            <person name="Levy A."/>
            <person name="Martinka S."/>
            <person name="Mead K."/>
            <person name="McLellan M.D."/>
            <person name="Meyer R."/>
            <person name="Randall-Maher J."/>
            <person name="Tomlinson C."/>
            <person name="Dauphin-Kohlberg S."/>
            <person name="Kozlowicz-Reilly A."/>
            <person name="Shah N."/>
            <person name="Swearengen-Shahid S."/>
            <person name="Snider J."/>
            <person name="Strong J.T."/>
            <person name="Thompson J."/>
            <person name="Yoakum M."/>
            <person name="Leonard S."/>
            <person name="Pearman C."/>
            <person name="Trani L."/>
            <person name="Radionenko M."/>
            <person name="Waligorski J.E."/>
            <person name="Wang C."/>
            <person name="Rock S.M."/>
            <person name="Tin-Wollam A.-M."/>
            <person name="Maupin R."/>
            <person name="Latreille P."/>
            <person name="Wendl M.C."/>
            <person name="Yang S.-P."/>
            <person name="Pohl C."/>
            <person name="Wallis J.W."/>
            <person name="Spieth J."/>
            <person name="Bieri T.A."/>
            <person name="Berkowicz N."/>
            <person name="Nelson J.O."/>
            <person name="Osborne J."/>
            <person name="Ding L."/>
            <person name="Meyer R."/>
            <person name="Sabo A."/>
            <person name="Shotland Y."/>
            <person name="Sinha P."/>
            <person name="Wohldmann P.E."/>
            <person name="Cook L.L."/>
            <person name="Hickenbotham M.T."/>
            <person name="Eldred J."/>
            <person name="Williams D."/>
            <person name="Jones T.A."/>
            <person name="She X."/>
            <person name="Ciccarelli F.D."/>
            <person name="Izaurralde E."/>
            <person name="Taylor J."/>
            <person name="Schmutz J."/>
            <person name="Myers R.M."/>
            <person name="Cox D.R."/>
            <person name="Huang X."/>
            <person name="McPherson J.D."/>
            <person name="Mardis E.R."/>
            <person name="Clifton S.W."/>
            <person name="Warren W.C."/>
            <person name="Chinwalla A.T."/>
            <person name="Eddy S.R."/>
            <person name="Marra M.A."/>
            <person name="Ovcharenko I."/>
            <person name="Furey T.S."/>
            <person name="Miller W."/>
            <person name="Eichler E.E."/>
            <person name="Bork P."/>
            <person name="Suyama M."/>
            <person name="Torrents D."/>
            <person name="Waterston R.H."/>
            <person name="Wilson R.K."/>
        </authorList>
    </citation>
    <scope>NUCLEOTIDE SEQUENCE [LARGE SCALE GENOMIC DNA]</scope>
</reference>
<reference key="4">
    <citation type="submission" date="2005-09" db="EMBL/GenBank/DDBJ databases">
        <authorList>
            <person name="Mural R.J."/>
            <person name="Istrail S."/>
            <person name="Sutton G.G."/>
            <person name="Florea L."/>
            <person name="Halpern A.L."/>
            <person name="Mobarry C.M."/>
            <person name="Lippert R."/>
            <person name="Walenz B."/>
            <person name="Shatkay H."/>
            <person name="Dew I."/>
            <person name="Miller J.R."/>
            <person name="Flanigan M.J."/>
            <person name="Edwards N.J."/>
            <person name="Bolanos R."/>
            <person name="Fasulo D."/>
            <person name="Halldorsson B.V."/>
            <person name="Hannenhalli S."/>
            <person name="Turner R."/>
            <person name="Yooseph S."/>
            <person name="Lu F."/>
            <person name="Nusskern D.R."/>
            <person name="Shue B.C."/>
            <person name="Zheng X.H."/>
            <person name="Zhong F."/>
            <person name="Delcher A.L."/>
            <person name="Huson D.H."/>
            <person name="Kravitz S.A."/>
            <person name="Mouchard L."/>
            <person name="Reinert K."/>
            <person name="Remington K.A."/>
            <person name="Clark A.G."/>
            <person name="Waterman M.S."/>
            <person name="Eichler E.E."/>
            <person name="Adams M.D."/>
            <person name="Hunkapiller M.W."/>
            <person name="Myers E.W."/>
            <person name="Venter J.C."/>
        </authorList>
    </citation>
    <scope>NUCLEOTIDE SEQUENCE [LARGE SCALE GENOMIC DNA]</scope>
</reference>
<reference key="5">
    <citation type="journal article" date="2004" name="Genome Res.">
        <title>The status, quality, and expansion of the NIH full-length cDNA project: the Mammalian Gene Collection (MGC).</title>
        <authorList>
            <consortium name="The MGC Project Team"/>
        </authorList>
    </citation>
    <scope>NUCLEOTIDE SEQUENCE [LARGE SCALE MRNA]</scope>
    <source>
        <tissue>Brain</tissue>
    </source>
</reference>
<reference key="6">
    <citation type="journal article" date="2004" name="Nat. Cell Biol.">
        <title>FAPPs control Golgi-to-cell-surface membrane traffic by binding to ARF and PtdIns(4)P.</title>
        <authorList>
            <person name="Godi A."/>
            <person name="Di Campli A."/>
            <person name="Konstantakopoulos A."/>
            <person name="Di Tullio G."/>
            <person name="Alessi D.R."/>
            <person name="Kular G.S."/>
            <person name="Daniele T."/>
            <person name="Marra P."/>
            <person name="Lucocq J.M."/>
            <person name="De Matteis M.A."/>
        </authorList>
    </citation>
    <scope>FUNCTION</scope>
    <scope>SUBCELLULAR LOCATION</scope>
    <scope>INTERACTION WITH ARF1</scope>
    <scope>DOMAIN PH</scope>
</reference>
<reference key="7">
    <citation type="journal article" date="2008" name="Proc. Natl. Acad. Sci. U.S.A.">
        <title>A quantitative atlas of mitotic phosphorylation.</title>
        <authorList>
            <person name="Dephoure N."/>
            <person name="Zhou C."/>
            <person name="Villen J."/>
            <person name="Beausoleil S.A."/>
            <person name="Bakalarski C.E."/>
            <person name="Elledge S.J."/>
            <person name="Gygi S.P."/>
        </authorList>
    </citation>
    <scope>IDENTIFICATION BY MASS SPECTROMETRY [LARGE SCALE ANALYSIS]</scope>
    <source>
        <tissue>Cervix carcinoma</tissue>
    </source>
</reference>
<reference key="8">
    <citation type="journal article" date="2013" name="J. Proteome Res.">
        <title>Toward a comprehensive characterization of a human cancer cell phosphoproteome.</title>
        <authorList>
            <person name="Zhou H."/>
            <person name="Di Palma S."/>
            <person name="Preisinger C."/>
            <person name="Peng M."/>
            <person name="Polat A.N."/>
            <person name="Heck A.J."/>
            <person name="Mohammed S."/>
        </authorList>
    </citation>
    <scope>PHOSPHORYLATION [LARGE SCALE ANALYSIS] AT SER-236 AND SER-244</scope>
    <scope>IDENTIFICATION BY MASS SPECTROMETRY [LARGE SCALE ANALYSIS]</scope>
    <source>
        <tissue>Erythroleukemia</tissue>
    </source>
</reference>
<reference key="9">
    <citation type="journal article" date="2019" name="J. Cell Biol.">
        <title>The activity of Sac1 across ER-TGN contact sites requires the four-phosphate-adaptor-protein-1.</title>
        <authorList>
            <person name="Venditti R."/>
            <person name="Masone M.C."/>
            <person name="Rega L.R."/>
            <person name="Di Tullio G."/>
            <person name="Santoro M."/>
            <person name="Polishchuk E."/>
            <person name="Serrano I.C."/>
            <person name="Olkkonen V.M."/>
            <person name="Harada A."/>
            <person name="Medina D.L."/>
            <person name="La Montagna R."/>
            <person name="De Matteis M.A."/>
        </authorList>
    </citation>
    <scope>FUNCTION</scope>
    <scope>SUBCELLULAR LOCATION</scope>
    <scope>INTERACTION WITH SACM1L AND VAPA AND/OR VAPB</scope>
</reference>
<reference key="10">
    <citation type="journal article" date="2010" name="EMBO Rep.">
        <title>Structural basis of wedging the Golgi membrane by FAPP pleckstrin homology domains.</title>
        <authorList>
            <person name="Lenoir M."/>
            <person name="Coskun U."/>
            <person name="Grzybek M."/>
            <person name="Cao X."/>
            <person name="Buschhorn S.B."/>
            <person name="James J."/>
            <person name="Simons K."/>
            <person name="Overduin M."/>
        </authorList>
    </citation>
    <scope>STRUCTURE BY NMR OF 1-100</scope>
</reference>
<reference key="11">
    <citation type="journal article" date="2011" name="J. Biol. Chem.">
        <title>Molecular basis of phosphatidylinositol 4-phosphate and ARF1 GTPase recognition by the FAPP1 pleckstrin homology (PH) domain.</title>
        <authorList>
            <person name="He J."/>
            <person name="Scott J.L."/>
            <person name="Heroux A."/>
            <person name="Roy S."/>
            <person name="Lenoir M."/>
            <person name="Overduin M."/>
            <person name="Stahelin R.V."/>
            <person name="Kutateladze T.G."/>
        </authorList>
    </citation>
    <scope>X-RAY CRYSTALLOGRAPHY (1.9 ANGSTROMS) OF 1-99 OF MUTANT SER-94</scope>
    <scope>INTERACTION WITH ARF1</scope>
</reference>
<sequence length="300" mass="33861">MEGVLYKWTNYLTGWQPRWFVLDNGILSYYDSQDDVCKGSKGSIKMAVCEIKVHSADNTRMELIIPGEQHFYMKAVNAAERQRWLVALGSSKACLTDTRTKKEKEISETSESLKTKMSELRLYCDLLMQQVHTIQEFVHHDENHSSPSAENMNEASSLLSATCNTFITTLEECVKIANAKFKPEMFQLHHPDPLVSPVSPSPVQMMKRSVSHPGSCSSERSSHSIKEPVSTLHRLSQRRRRTYSDTDSCSDIPLEDPDRPVHCSKNTLNGDLASATIPEESRLMAKKQSESEDTLPSFSS</sequence>
<name>PKHA3_HUMAN</name>
<gene>
    <name type="primary">PLEKHA3</name>
    <name type="synonym">FAPP1</name>
</gene>
<protein>
    <recommendedName>
        <fullName>Pleckstrin homology domain-containing family A member 3</fullName>
        <shortName>PH domain-containing family A member 3</shortName>
    </recommendedName>
    <alternativeName>
        <fullName evidence="7">Phosphatidylinositol-four-phosphate adapter protein 1</fullName>
        <shortName>FAPP-1</shortName>
        <shortName>Phosphoinositol 4-phosphate adapter protein 1</shortName>
    </alternativeName>
</protein>
<dbReference type="EMBL" id="AF286162">
    <property type="protein sequence ID" value="AAG15199.1"/>
    <property type="molecule type" value="mRNA"/>
</dbReference>
<dbReference type="EMBL" id="AK000074">
    <property type="protein sequence ID" value="BAA90927.1"/>
    <property type="status" value="ALT_INIT"/>
    <property type="molecule type" value="mRNA"/>
</dbReference>
<dbReference type="EMBL" id="AK314459">
    <property type="protein sequence ID" value="BAG37067.1"/>
    <property type="molecule type" value="mRNA"/>
</dbReference>
<dbReference type="EMBL" id="AC009948">
    <property type="protein sequence ID" value="AAX88884.1"/>
    <property type="molecule type" value="Genomic_DNA"/>
</dbReference>
<dbReference type="EMBL" id="CH471058">
    <property type="protein sequence ID" value="EAX11026.1"/>
    <property type="molecule type" value="Genomic_DNA"/>
</dbReference>
<dbReference type="EMBL" id="BC044567">
    <property type="protein sequence ID" value="AAH44567.1"/>
    <property type="molecule type" value="mRNA"/>
</dbReference>
<dbReference type="CCDS" id="CCDS33336.1"/>
<dbReference type="RefSeq" id="NP_061964.3">
    <property type="nucleotide sequence ID" value="NM_019091.3"/>
</dbReference>
<dbReference type="PDB" id="2KCJ">
    <property type="method" value="NMR"/>
    <property type="chains" value="A=1-100"/>
</dbReference>
<dbReference type="PDB" id="2MDX">
    <property type="method" value="NMR"/>
    <property type="chains" value="A=1-100"/>
</dbReference>
<dbReference type="PDB" id="3RCP">
    <property type="method" value="X-ray"/>
    <property type="resolution" value="1.90 A"/>
    <property type="chains" value="A=1-99"/>
</dbReference>
<dbReference type="PDBsum" id="2KCJ"/>
<dbReference type="PDBsum" id="2MDX"/>
<dbReference type="PDBsum" id="3RCP"/>
<dbReference type="BMRB" id="Q9HB20"/>
<dbReference type="SMR" id="Q9HB20"/>
<dbReference type="BioGRID" id="122427">
    <property type="interactions" value="37"/>
</dbReference>
<dbReference type="FunCoup" id="Q9HB20">
    <property type="interactions" value="2163"/>
</dbReference>
<dbReference type="IntAct" id="Q9HB20">
    <property type="interactions" value="24"/>
</dbReference>
<dbReference type="STRING" id="9606.ENSP00000234453"/>
<dbReference type="GlyGen" id="Q9HB20">
    <property type="glycosylation" value="1 site, 1 O-linked glycan (1 site)"/>
</dbReference>
<dbReference type="iPTMnet" id="Q9HB20"/>
<dbReference type="PhosphoSitePlus" id="Q9HB20"/>
<dbReference type="BioMuta" id="PLEKHA3"/>
<dbReference type="DMDM" id="48474646"/>
<dbReference type="jPOST" id="Q9HB20"/>
<dbReference type="MassIVE" id="Q9HB20"/>
<dbReference type="PaxDb" id="9606-ENSP00000234453"/>
<dbReference type="PeptideAtlas" id="Q9HB20"/>
<dbReference type="ProteomicsDB" id="81473"/>
<dbReference type="Pumba" id="Q9HB20"/>
<dbReference type="Antibodypedia" id="33940">
    <property type="antibodies" value="120 antibodies from 19 providers"/>
</dbReference>
<dbReference type="DNASU" id="65977"/>
<dbReference type="Ensembl" id="ENST00000234453.10">
    <property type="protein sequence ID" value="ENSP00000234453.4"/>
    <property type="gene ID" value="ENSG00000116095.11"/>
</dbReference>
<dbReference type="GeneID" id="65977"/>
<dbReference type="KEGG" id="hsa:65977"/>
<dbReference type="MANE-Select" id="ENST00000234453.10">
    <property type="protein sequence ID" value="ENSP00000234453.4"/>
    <property type="RefSeq nucleotide sequence ID" value="NM_019091.4"/>
    <property type="RefSeq protein sequence ID" value="NP_061964.3"/>
</dbReference>
<dbReference type="UCSC" id="uc002umn.4">
    <property type="organism name" value="human"/>
</dbReference>
<dbReference type="AGR" id="HGNC:14338"/>
<dbReference type="CTD" id="65977"/>
<dbReference type="DisGeNET" id="65977"/>
<dbReference type="GeneCards" id="PLEKHA3"/>
<dbReference type="HGNC" id="HGNC:14338">
    <property type="gene designation" value="PLEKHA3"/>
</dbReference>
<dbReference type="HPA" id="ENSG00000116095">
    <property type="expression patterns" value="Low tissue specificity"/>
</dbReference>
<dbReference type="MIM" id="607774">
    <property type="type" value="gene"/>
</dbReference>
<dbReference type="neXtProt" id="NX_Q9HB20"/>
<dbReference type="OpenTargets" id="ENSG00000116095"/>
<dbReference type="PharmGKB" id="PA33403"/>
<dbReference type="VEuPathDB" id="HostDB:ENSG00000116095"/>
<dbReference type="eggNOG" id="ENOG502QPTX">
    <property type="taxonomic scope" value="Eukaryota"/>
</dbReference>
<dbReference type="GeneTree" id="ENSGT00940000155850"/>
<dbReference type="HOGENOM" id="CLU_062751_0_0_1"/>
<dbReference type="InParanoid" id="Q9HB20"/>
<dbReference type="OMA" id="VGWQPRW"/>
<dbReference type="OrthoDB" id="1854502at2759"/>
<dbReference type="PAN-GO" id="Q9HB20">
    <property type="GO annotations" value="5 GO annotations based on evolutionary models"/>
</dbReference>
<dbReference type="PhylomeDB" id="Q9HB20"/>
<dbReference type="TreeFam" id="TF317467"/>
<dbReference type="PathwayCommons" id="Q9HB20"/>
<dbReference type="Reactome" id="R-HSA-1660499">
    <property type="pathway name" value="Synthesis of PIPs at the plasma membrane"/>
</dbReference>
<dbReference type="SignaLink" id="Q9HB20"/>
<dbReference type="BioGRID-ORCS" id="65977">
    <property type="hits" value="17 hits in 1158 CRISPR screens"/>
</dbReference>
<dbReference type="ChiTaRS" id="PLEKHA3">
    <property type="organism name" value="human"/>
</dbReference>
<dbReference type="EvolutionaryTrace" id="Q9HB20"/>
<dbReference type="GenomeRNAi" id="65977"/>
<dbReference type="Pharos" id="Q9HB20">
    <property type="development level" value="Tbio"/>
</dbReference>
<dbReference type="PRO" id="PR:Q9HB20"/>
<dbReference type="Proteomes" id="UP000005640">
    <property type="component" value="Chromosome 2"/>
</dbReference>
<dbReference type="RNAct" id="Q9HB20">
    <property type="molecule type" value="protein"/>
</dbReference>
<dbReference type="Bgee" id="ENSG00000116095">
    <property type="expression patterns" value="Expressed in epithelial cell of pancreas and 189 other cell types or tissues"/>
</dbReference>
<dbReference type="ExpressionAtlas" id="Q9HB20">
    <property type="expression patterns" value="baseline and differential"/>
</dbReference>
<dbReference type="GO" id="GO:0005829">
    <property type="term" value="C:cytosol"/>
    <property type="evidence" value="ECO:0007669"/>
    <property type="project" value="GOC"/>
</dbReference>
<dbReference type="GO" id="GO:0005769">
    <property type="term" value="C:early endosome"/>
    <property type="evidence" value="ECO:0000318"/>
    <property type="project" value="GO_Central"/>
</dbReference>
<dbReference type="GO" id="GO:0005794">
    <property type="term" value="C:Golgi apparatus"/>
    <property type="evidence" value="ECO:0000314"/>
    <property type="project" value="HPA"/>
</dbReference>
<dbReference type="GO" id="GO:0000139">
    <property type="term" value="C:Golgi membrane"/>
    <property type="evidence" value="ECO:0000304"/>
    <property type="project" value="Reactome"/>
</dbReference>
<dbReference type="GO" id="GO:0055037">
    <property type="term" value="C:recycling endosome"/>
    <property type="evidence" value="ECO:0000318"/>
    <property type="project" value="GO_Central"/>
</dbReference>
<dbReference type="GO" id="GO:0005802">
    <property type="term" value="C:trans-Golgi network"/>
    <property type="evidence" value="ECO:0000318"/>
    <property type="project" value="GO_Central"/>
</dbReference>
<dbReference type="GO" id="GO:0042802">
    <property type="term" value="F:identical protein binding"/>
    <property type="evidence" value="ECO:0000353"/>
    <property type="project" value="IntAct"/>
</dbReference>
<dbReference type="GO" id="GO:0070273">
    <property type="term" value="F:phosphatidylinositol-4-phosphate binding"/>
    <property type="evidence" value="ECO:0000314"/>
    <property type="project" value="UniProtKB"/>
</dbReference>
<dbReference type="GO" id="GO:0007032">
    <property type="term" value="P:endosome organization"/>
    <property type="evidence" value="ECO:0000318"/>
    <property type="project" value="GO_Central"/>
</dbReference>
<dbReference type="GO" id="GO:0001881">
    <property type="term" value="P:receptor recycling"/>
    <property type="evidence" value="ECO:0000318"/>
    <property type="project" value="GO_Central"/>
</dbReference>
<dbReference type="GO" id="GO:0042147">
    <property type="term" value="P:retrograde transport, endosome to Golgi"/>
    <property type="evidence" value="ECO:0000318"/>
    <property type="project" value="GO_Central"/>
</dbReference>
<dbReference type="CDD" id="cd01247">
    <property type="entry name" value="PH_FAPP1_FAPP2"/>
    <property type="match status" value="1"/>
</dbReference>
<dbReference type="FunFam" id="2.30.29.30:FF:000085">
    <property type="entry name" value="Pleckstrin homology domain-containing family A member 8"/>
    <property type="match status" value="1"/>
</dbReference>
<dbReference type="Gene3D" id="2.30.29.30">
    <property type="entry name" value="Pleckstrin-homology domain (PH domain)/Phosphotyrosine-binding domain (PTB)"/>
    <property type="match status" value="1"/>
</dbReference>
<dbReference type="InterPro" id="IPR045188">
    <property type="entry name" value="Boi1/Boi2-like"/>
</dbReference>
<dbReference type="InterPro" id="IPR011993">
    <property type="entry name" value="PH-like_dom_sf"/>
</dbReference>
<dbReference type="InterPro" id="IPR001849">
    <property type="entry name" value="PH_domain"/>
</dbReference>
<dbReference type="PANTHER" id="PTHR22902:SF27">
    <property type="entry name" value="PLECKSTRIN HOMOLOGY DOMAIN-CONTAINING FAMILY A MEMBER 3"/>
    <property type="match status" value="1"/>
</dbReference>
<dbReference type="PANTHER" id="PTHR22902">
    <property type="entry name" value="SESQUIPEDALIAN"/>
    <property type="match status" value="1"/>
</dbReference>
<dbReference type="Pfam" id="PF00169">
    <property type="entry name" value="PH"/>
    <property type="match status" value="1"/>
</dbReference>
<dbReference type="SMART" id="SM00233">
    <property type="entry name" value="PH"/>
    <property type="match status" value="1"/>
</dbReference>
<dbReference type="SUPFAM" id="SSF50729">
    <property type="entry name" value="PH domain-like"/>
    <property type="match status" value="1"/>
</dbReference>
<dbReference type="PROSITE" id="PS50003">
    <property type="entry name" value="PH_DOMAIN"/>
    <property type="match status" value="1"/>
</dbReference>
<organism>
    <name type="scientific">Homo sapiens</name>
    <name type="common">Human</name>
    <dbReference type="NCBI Taxonomy" id="9606"/>
    <lineage>
        <taxon>Eukaryota</taxon>
        <taxon>Metazoa</taxon>
        <taxon>Chordata</taxon>
        <taxon>Craniata</taxon>
        <taxon>Vertebrata</taxon>
        <taxon>Euteleostomi</taxon>
        <taxon>Mammalia</taxon>
        <taxon>Eutheria</taxon>
        <taxon>Euarchontoglires</taxon>
        <taxon>Primates</taxon>
        <taxon>Haplorrhini</taxon>
        <taxon>Catarrhini</taxon>
        <taxon>Hominidae</taxon>
        <taxon>Homo</taxon>
    </lineage>
</organism>
<proteinExistence type="evidence at protein level"/>
<evidence type="ECO:0000255" key="1">
    <source>
        <dbReference type="PROSITE-ProRule" id="PRU00145"/>
    </source>
</evidence>
<evidence type="ECO:0000256" key="2">
    <source>
        <dbReference type="SAM" id="MobiDB-lite"/>
    </source>
</evidence>
<evidence type="ECO:0000269" key="3">
    <source>
    </source>
</evidence>
<evidence type="ECO:0000269" key="4">
    <source>
    </source>
</evidence>
<evidence type="ECO:0000269" key="5">
    <source>
    </source>
</evidence>
<evidence type="ECO:0000269" key="6">
    <source>
    </source>
</evidence>
<evidence type="ECO:0000303" key="7">
    <source>
    </source>
</evidence>
<evidence type="ECO:0000305" key="8"/>
<evidence type="ECO:0007744" key="9">
    <source>
    </source>
</evidence>
<evidence type="ECO:0007829" key="10">
    <source>
        <dbReference type="PDB" id="2KCJ"/>
    </source>
</evidence>
<evidence type="ECO:0007829" key="11">
    <source>
        <dbReference type="PDB" id="3RCP"/>
    </source>
</evidence>
<keyword id="KW-0002">3D-structure</keyword>
<keyword id="KW-0333">Golgi apparatus</keyword>
<keyword id="KW-0446">Lipid-binding</keyword>
<keyword id="KW-0472">Membrane</keyword>
<keyword id="KW-0597">Phosphoprotein</keyword>
<keyword id="KW-1267">Proteomics identification</keyword>
<keyword id="KW-1185">Reference proteome</keyword>
<accession>Q9HB20</accession>
<accession>Q4ZG69</accession>
<accession>Q86TQ1</accession>
<accession>Q9NXT3</accession>
<feature type="chain" id="PRO_0000053878" description="Pleckstrin homology domain-containing family A member 3">
    <location>
        <begin position="1"/>
        <end position="300"/>
    </location>
</feature>
<feature type="domain" description="PH" evidence="1">
    <location>
        <begin position="1"/>
        <end position="93"/>
    </location>
</feature>
<feature type="region of interest" description="Interaction with SACM1L" evidence="6">
    <location>
        <begin position="1"/>
        <end position="100"/>
    </location>
</feature>
<feature type="region of interest" description="Interaction with VAPA and VAPB" evidence="6">
    <location>
        <begin position="97"/>
        <end position="300"/>
    </location>
</feature>
<feature type="region of interest" description="Disordered" evidence="2">
    <location>
        <begin position="197"/>
        <end position="300"/>
    </location>
</feature>
<feature type="compositionally biased region" description="Basic and acidic residues" evidence="2">
    <location>
        <begin position="279"/>
        <end position="290"/>
    </location>
</feature>
<feature type="modified residue" description="Phosphoserine" evidence="9">
    <location>
        <position position="236"/>
    </location>
</feature>
<feature type="modified residue" description="Phosphoserine" evidence="9">
    <location>
        <position position="244"/>
    </location>
</feature>
<feature type="sequence conflict" description="In Ref. 1; AAG15199." evidence="8" ref="1">
    <original>M</original>
    <variation>T</variation>
    <location>
        <position position="284"/>
    </location>
</feature>
<feature type="strand" evidence="11">
    <location>
        <begin position="2"/>
        <end position="8"/>
    </location>
</feature>
<feature type="turn" evidence="11">
    <location>
        <begin position="11"/>
        <end position="13"/>
    </location>
</feature>
<feature type="strand" evidence="11">
    <location>
        <begin position="15"/>
        <end position="23"/>
    </location>
</feature>
<feature type="strand" evidence="11">
    <location>
        <begin position="26"/>
        <end position="32"/>
    </location>
</feature>
<feature type="helix" evidence="10">
    <location>
        <begin position="33"/>
        <end position="38"/>
    </location>
</feature>
<feature type="strand" evidence="11">
    <location>
        <begin position="43"/>
        <end position="45"/>
    </location>
</feature>
<feature type="helix" evidence="11">
    <location>
        <begin position="46"/>
        <end position="48"/>
    </location>
</feature>
<feature type="strand" evidence="11">
    <location>
        <begin position="50"/>
        <end position="52"/>
    </location>
</feature>
<feature type="strand" evidence="11">
    <location>
        <begin position="58"/>
        <end position="65"/>
    </location>
</feature>
<feature type="turn" evidence="11">
    <location>
        <begin position="66"/>
        <end position="68"/>
    </location>
</feature>
<feature type="strand" evidence="11">
    <location>
        <begin position="69"/>
        <end position="74"/>
    </location>
</feature>
<feature type="helix" evidence="11">
    <location>
        <begin position="78"/>
        <end position="89"/>
    </location>
</feature>
<comment type="function">
    <text evidence="3 4 6">Plays a role in regulation of vesicular cargo transport from the trans-Golgi network (TGN) to the plasma membrane (PubMed:15107860). Regulates Golgi phosphatidylinositol 4-phosphate (PtdIns(4)P) levels and activates the PtdIns(4)P phosphatase activity of SACM1L when it binds PtdIns(4)P in 'trans' configuration (PubMed:30659099). Binds preferentially to PtdIns(4)P (PubMed:11001876, PubMed:15107860). Negatively regulates APOB secretion from hepatocytes (PubMed:30659099).</text>
</comment>
<comment type="subunit">
    <text evidence="4 5 6">Interacts with GTP-bound ARF1 (PubMed:15107860, PubMed:21454700). Interacts with SACM1L and VAPA and/or VAPB to form a ternary complex (PubMed:30659099).</text>
</comment>
<comment type="interaction">
    <interactant intactId="EBI-11079894">
        <id>Q9HB20</id>
    </interactant>
    <interactant intactId="EBI-10694655">
        <id>Q7L591-3</id>
        <label>DOK3</label>
    </interactant>
    <organismsDiffer>false</organismsDiffer>
    <experiments>3</experiments>
</comment>
<comment type="interaction">
    <interactant intactId="EBI-11079894">
        <id>Q9HB20</id>
    </interactant>
    <interactant intactId="EBI-10288852">
        <id>Q9UBU8-2</id>
        <label>MORF4L1</label>
    </interactant>
    <organismsDiffer>false</organismsDiffer>
    <experiments>3</experiments>
</comment>
<comment type="interaction">
    <interactant intactId="EBI-11079894">
        <id>Q9HB20</id>
    </interactant>
    <interactant intactId="EBI-2514313">
        <id>Q9BRJ2</id>
        <label>MRPL45</label>
    </interactant>
    <organismsDiffer>false</organismsDiffer>
    <experiments>3</experiments>
</comment>
<comment type="interaction">
    <interactant intactId="EBI-11079894">
        <id>Q9HB20</id>
    </interactant>
    <interactant intactId="EBI-7950783">
        <id>Q96JP2</id>
        <label>MYO15B</label>
    </interactant>
    <organismsDiffer>false</organismsDiffer>
    <experiments>3</experiments>
</comment>
<comment type="interaction">
    <interactant intactId="EBI-11079894">
        <id>Q9HB20</id>
    </interactant>
    <interactant intactId="EBI-11079894">
        <id>Q9HB20</id>
        <label>PLEKHA3</label>
    </interactant>
    <organismsDiffer>false</organismsDiffer>
    <experiments>6</experiments>
</comment>
<comment type="interaction">
    <interactant intactId="EBI-11079894">
        <id>Q9HB20</id>
    </interactant>
    <interactant intactId="EBI-877832">
        <id>O43148</id>
        <label>RNMT</label>
    </interactant>
    <organismsDiffer>false</organismsDiffer>
    <experiments>3</experiments>
</comment>
<comment type="interaction">
    <interactant intactId="EBI-11079894">
        <id>Q9HB20</id>
    </interactant>
    <interactant intactId="EBI-19952306">
        <id>O14492-2</id>
        <label>SH2B2</label>
    </interactant>
    <organismsDiffer>false</organismsDiffer>
    <experiments>3</experiments>
</comment>
<comment type="interaction">
    <interactant intactId="EBI-11079894">
        <id>Q9HB20</id>
    </interactant>
    <interactant intactId="EBI-727338">
        <id>O95988</id>
        <label>TCL1B</label>
    </interactant>
    <organismsDiffer>false</organismsDiffer>
    <experiments>3</experiments>
</comment>
<comment type="subcellular location">
    <subcellularLocation>
        <location evidence="4">Golgi apparatus</location>
        <location evidence="4">trans-Golgi network membrane</location>
        <topology evidence="4">Peripheral membrane protein</topology>
    </subcellularLocation>
    <text evidence="6">Localizes to ER-trans Golgi network (TGN) contacts sites.</text>
</comment>
<comment type="tissue specificity">
    <text>Widely expressed.</text>
</comment>
<comment type="domain">
    <text evidence="4">The PH domain binds the small GTPase ARF1 and phosphatidylinositol-4-phosphate (PtdIns4P) with high selectivity, and is required for its recruitment to the trans-Golgi network (TGN).</text>
</comment>
<comment type="sequence caution" evidence="8">
    <conflict type="erroneous initiation">
        <sequence resource="EMBL-CDS" id="BAA90927"/>
    </conflict>
</comment>